<accession>Q21415</accession>
<accession>Q9BK23</accession>
<organism evidence="9">
    <name type="scientific">Caenorhabditis elegans</name>
    <dbReference type="NCBI Taxonomy" id="6239"/>
    <lineage>
        <taxon>Eukaryota</taxon>
        <taxon>Metazoa</taxon>
        <taxon>Ecdysozoa</taxon>
        <taxon>Nematoda</taxon>
        <taxon>Chromadorea</taxon>
        <taxon>Rhabditida</taxon>
        <taxon>Rhabditina</taxon>
        <taxon>Rhabditomorpha</taxon>
        <taxon>Rhabditoidea</taxon>
        <taxon>Rhabditidae</taxon>
        <taxon>Peloderinae</taxon>
        <taxon>Caenorhabditis</taxon>
    </lineage>
</organism>
<reference evidence="9" key="1">
    <citation type="journal article" date="1998" name="Science">
        <title>Genome sequence of the nematode C. elegans: a platform for investigating biology.</title>
        <authorList>
            <consortium name="The C. elegans sequencing consortium"/>
        </authorList>
    </citation>
    <scope>NUCLEOTIDE SEQUENCE [LARGE SCALE GENOMIC DNA]</scope>
    <source>
        <strain evidence="9">Bristol N2</strain>
    </source>
</reference>
<reference evidence="8" key="2">
    <citation type="journal article" date="2001" name="J. Neurosci.">
        <title>Differential expression of glutamate receptor subunits in the nervous system of Caenorhabditis elegans and their regulation by the homeodomain protein UNC-42.</title>
        <authorList>
            <person name="Brockie P.J."/>
            <person name="Madsen D.M."/>
            <person name="Zheng Y."/>
            <person name="Mellem J."/>
            <person name="Maricq A.V."/>
        </authorList>
    </citation>
    <scope>NUCLEOTIDE SEQUENCE [MRNA] OF 405-802</scope>
    <scope>TISSUE SPECIFICITY</scope>
    <scope>DEVELOPMENTAL STAGE</scope>
</reference>
<reference evidence="7" key="3">
    <citation type="journal article" date="2019" name="Cell">
        <title>A Cold-Sensing Receptor Encoded by a Glutamate Receptor Gene.</title>
        <authorList>
            <person name="Gong J."/>
            <person name="Liu J."/>
            <person name="Ronan E.A."/>
            <person name="He F."/>
            <person name="Cai W."/>
            <person name="Fatima M."/>
            <person name="Zhang W."/>
            <person name="Lee H."/>
            <person name="Li Z."/>
            <person name="Kim G.H."/>
            <person name="Pipe K.P."/>
            <person name="Duan B."/>
            <person name="Liu J."/>
            <person name="Xu X.Z.S."/>
        </authorList>
    </citation>
    <scope>FUNCTION</scope>
    <scope>ACTIVITY REGULATION</scope>
    <scope>TISSUE SPECIFICITY</scope>
    <scope>DISRUPTION PHENOTYPE</scope>
    <scope>MUTAGENESIS OF PRO-121; PRO-130; MET-582 AND GLN-584</scope>
</reference>
<proteinExistence type="evidence at protein level"/>
<name>GLR3_CAEEL</name>
<gene>
    <name evidence="10" type="primary">glr-3</name>
    <name evidence="10" type="ORF">K10D3.1</name>
</gene>
<feature type="signal peptide" evidence="3">
    <location>
        <begin position="1"/>
        <end position="19"/>
    </location>
</feature>
<feature type="chain" id="PRO_5004199558" description="Glutamate receptor ionotropic, kainate glr-3" evidence="3">
    <location>
        <begin position="20"/>
        <end position="836"/>
    </location>
</feature>
<feature type="topological domain" description="Extracellular" evidence="7">
    <location>
        <begin position="20"/>
        <end position="523"/>
    </location>
</feature>
<feature type="transmembrane region" description="Helical" evidence="3">
    <location>
        <begin position="524"/>
        <end position="544"/>
    </location>
</feature>
<feature type="topological domain" description="Cytoplasmic" evidence="7">
    <location>
        <begin position="545"/>
        <end position="600"/>
    </location>
</feature>
<feature type="transmembrane region" description="Helical" evidence="3">
    <location>
        <begin position="601"/>
        <end position="621"/>
    </location>
</feature>
<feature type="topological domain" description="Extracellular" evidence="7">
    <location>
        <begin position="622"/>
        <end position="780"/>
    </location>
</feature>
<feature type="transmembrane region" description="Helical" evidence="3">
    <location>
        <begin position="781"/>
        <end position="801"/>
    </location>
</feature>
<feature type="topological domain" description="Cytoplasmic" evidence="7">
    <location>
        <begin position="802"/>
        <end position="836"/>
    </location>
</feature>
<feature type="binding site" evidence="2">
    <location>
        <begin position="478"/>
        <end position="480"/>
    </location>
    <ligand>
        <name>L-glutamate</name>
        <dbReference type="ChEBI" id="CHEBI:29985"/>
    </ligand>
</feature>
<feature type="binding site" evidence="2">
    <location>
        <position position="485"/>
    </location>
    <ligand>
        <name>L-glutamate</name>
        <dbReference type="ChEBI" id="CHEBI:29985"/>
    </ligand>
</feature>
<feature type="binding site" evidence="2">
    <location>
        <begin position="651"/>
        <end position="652"/>
    </location>
    <ligand>
        <name>L-glutamate</name>
        <dbReference type="ChEBI" id="CHEBI:29985"/>
    </ligand>
</feature>
<feature type="binding site" evidence="2">
    <location>
        <position position="699"/>
    </location>
    <ligand>
        <name>L-glutamate</name>
        <dbReference type="ChEBI" id="CHEBI:29985"/>
    </ligand>
</feature>
<feature type="glycosylation site" description="N-linked (GlcNAc...) asparagine" evidence="4">
    <location>
        <position position="225"/>
    </location>
</feature>
<feature type="glycosylation site" description="N-linked (GlcNAc...) asparagine" evidence="4">
    <location>
        <position position="257"/>
    </location>
</feature>
<feature type="glycosylation site" description="N-linked (GlcNAc...) asparagine" evidence="4">
    <location>
        <position position="356"/>
    </location>
</feature>
<feature type="glycosylation site" description="N-linked (GlcNAc...) asparagine" evidence="4">
    <location>
        <position position="391"/>
    </location>
</feature>
<feature type="glycosylation site" description="N-linked (GlcNAc...) asparagine" evidence="4">
    <location>
        <position position="419"/>
    </location>
</feature>
<feature type="glycosylation site" description="N-linked (GlcNAc...) asparagine" evidence="4">
    <location>
        <position position="657"/>
    </location>
</feature>
<feature type="disulfide bond" evidence="2">
    <location>
        <begin position="76"/>
        <end position="320"/>
    </location>
</feature>
<feature type="mutagenesis site" description="In xu261; abolishes cold receptor function. Decreases signal transduction during cold thermoreception signaling in intestine and ASER neuron." evidence="6">
    <original>P</original>
    <variation>L</variation>
    <location>
        <position position="121"/>
    </location>
</feature>
<feature type="mutagenesis site" description="Abolishes cold receptor function." evidence="6">
    <original>P</original>
    <variation>L</variation>
    <location>
        <position position="130"/>
    </location>
</feature>
<feature type="mutagenesis site" description="Normal cold receptor function." evidence="6">
    <original>M</original>
    <variation>R</variation>
    <location>
        <position position="582"/>
    </location>
</feature>
<feature type="mutagenesis site" description="Normal cold receptor function." evidence="6">
    <original>Q</original>
    <variation>R</variation>
    <location>
        <position position="584"/>
    </location>
</feature>
<sequence length="836" mass="94921">MFWIAKTLIAFLILLKTDCYKIAIPANLIDEVNPVLEFVDFRVQVIPYETKPLWRIKQESFKIVGISIENGLFSVCNCLILGASAIILPEQYDGHLAAAAIVQSIADNTNVPCVSLHLSPPTRPSTHLHPHLNAKSLAVAAFIKREKWKDVVVVFEEPDELLEITDMITAGHFDPDSFSSQLVRLKHGDDYGNELKHIKNKLDRYRIVINIPLQKALHFLEQAANMSMCGVLYHYVVMDMDLVTVDIDSIRGIEDCNITSFGVHDVNSEYIEDIRQEIVHKSSIRLPKKGVPYTTSIWIDTLRLLIRSMKSIQIWDEPRCGSSWKSGSDIKKRFFENPLAGISGDLHWAPSGERSNYTLHVYRRTLSFQKFAEWSSRTRRIASSEAVVIANSSEKLTLEGKHLKISVYLEAPFVMITSNGSYEGYCIDLLHKIANILKFTYTIQKVRDNAYGSKESNGKWSGMVGELQRGDADLAVASLTISYGRSEVIDFTVPYMHLGISILFKKPRIRDSDWFKFMDPLSTQVWIMTFASYFVVSVAIWIIAKISPYEQFERDEDNGQYKPVDNQFSLRNSFWFTVCSLMQQGSELCPRAASTRLLTGIWWFFALILISSYTANLAAVLTTRRMETPIENADDLAAQTKIKYGTLGRGSTMSFFNESKIETYERMWQLMSSSPGLFVQSSKEGIARVKSSDYAYLMESSMLEYAVERDCELMQIGGLIDQKGYGIGLPKGSPYRELISTAILRLQEKTELTELKEKWWKDKSVVCEQPKRKDQDDGESIGGIFIILVVGLVLTAVLVIFELITTRKPSPAQSQVIRHVNVIPSFKLGFFRWNVN</sequence>
<evidence type="ECO:0000250" key="1">
    <source>
        <dbReference type="UniProtKB" id="P39087"/>
    </source>
</evidence>
<evidence type="ECO:0000250" key="2">
    <source>
        <dbReference type="UniProtKB" id="P42260"/>
    </source>
</evidence>
<evidence type="ECO:0000255" key="3"/>
<evidence type="ECO:0000255" key="4">
    <source>
        <dbReference type="PROSITE-ProRule" id="PRU00498"/>
    </source>
</evidence>
<evidence type="ECO:0000269" key="5">
    <source>
    </source>
</evidence>
<evidence type="ECO:0000269" key="6">
    <source>
    </source>
</evidence>
<evidence type="ECO:0000305" key="7"/>
<evidence type="ECO:0000312" key="8">
    <source>
        <dbReference type="EMBL" id="AAK01095.1"/>
    </source>
</evidence>
<evidence type="ECO:0000312" key="9">
    <source>
        <dbReference type="Proteomes" id="UP000001940"/>
    </source>
</evidence>
<evidence type="ECO:0000312" key="10">
    <source>
        <dbReference type="WormBase" id="K10D3.1"/>
    </source>
</evidence>
<keyword id="KW-1003">Cell membrane</keyword>
<keyword id="KW-1015">Disulfide bond</keyword>
<keyword id="KW-0325">Glycoprotein</keyword>
<keyword id="KW-0407">Ion channel</keyword>
<keyword id="KW-0406">Ion transport</keyword>
<keyword id="KW-1071">Ligand-gated ion channel</keyword>
<keyword id="KW-0472">Membrane</keyword>
<keyword id="KW-0628">Postsynaptic cell membrane</keyword>
<keyword id="KW-0675">Receptor</keyword>
<keyword id="KW-1185">Reference proteome</keyword>
<keyword id="KW-0716">Sensory transduction</keyword>
<keyword id="KW-0732">Signal</keyword>
<keyword id="KW-0770">Synapse</keyword>
<keyword id="KW-0812">Transmembrane</keyword>
<keyword id="KW-1133">Transmembrane helix</keyword>
<keyword id="KW-0813">Transport</keyword>
<dbReference type="EMBL" id="BX284601">
    <property type="protein sequence ID" value="CAA99883.3"/>
    <property type="molecule type" value="Genomic_DNA"/>
</dbReference>
<dbReference type="EMBL" id="AF318607">
    <property type="protein sequence ID" value="AAK01095.1"/>
    <property type="molecule type" value="mRNA"/>
</dbReference>
<dbReference type="PIR" id="T23570">
    <property type="entry name" value="T23570"/>
</dbReference>
<dbReference type="RefSeq" id="NP_492017.3">
    <property type="nucleotide sequence ID" value="NM_059616.3"/>
</dbReference>
<dbReference type="SMR" id="Q21415"/>
<dbReference type="FunCoup" id="Q21415">
    <property type="interactions" value="6"/>
</dbReference>
<dbReference type="STRING" id="6239.K10D3.1.1"/>
<dbReference type="GlyCosmos" id="Q21415">
    <property type="glycosylation" value="6 sites, No reported glycans"/>
</dbReference>
<dbReference type="PaxDb" id="6239-K10D3.1"/>
<dbReference type="EnsemblMetazoa" id="K10D3.1.1">
    <property type="protein sequence ID" value="K10D3.1.1"/>
    <property type="gene ID" value="WBGene00001614"/>
</dbReference>
<dbReference type="GeneID" id="172449"/>
<dbReference type="KEGG" id="cel:CELE_K10D3.1"/>
<dbReference type="UCSC" id="K10D3.1">
    <property type="organism name" value="c. elegans"/>
</dbReference>
<dbReference type="AGR" id="WB:WBGene00001614"/>
<dbReference type="CTD" id="172449"/>
<dbReference type="WormBase" id="K10D3.1">
    <property type="protein sequence ID" value="CE36553"/>
    <property type="gene ID" value="WBGene00001614"/>
    <property type="gene designation" value="glr-3"/>
</dbReference>
<dbReference type="eggNOG" id="KOG1052">
    <property type="taxonomic scope" value="Eukaryota"/>
</dbReference>
<dbReference type="GeneTree" id="ENSGT00940000167320"/>
<dbReference type="HOGENOM" id="CLU_007257_1_1_1"/>
<dbReference type="InParanoid" id="Q21415"/>
<dbReference type="OMA" id="CKEMRGF"/>
<dbReference type="OrthoDB" id="5984008at2759"/>
<dbReference type="PhylomeDB" id="Q21415"/>
<dbReference type="Reactome" id="R-CEL-204005">
    <property type="pathway name" value="COPII-mediated vesicle transport"/>
</dbReference>
<dbReference type="Reactome" id="R-CEL-399710">
    <property type="pathway name" value="Activation of AMPA receptors"/>
</dbReference>
<dbReference type="Reactome" id="R-CEL-438066">
    <property type="pathway name" value="Unblocking of NMDA receptors, glutamate binding and activation"/>
</dbReference>
<dbReference type="Reactome" id="R-CEL-5694530">
    <property type="pathway name" value="Cargo concentration in the ER"/>
</dbReference>
<dbReference type="Reactome" id="R-CEL-8849932">
    <property type="pathway name" value="Synaptic adhesion-like molecules"/>
</dbReference>
<dbReference type="PRO" id="PR:Q21415"/>
<dbReference type="Proteomes" id="UP000001940">
    <property type="component" value="Chromosome I"/>
</dbReference>
<dbReference type="Bgee" id="WBGene00001614">
    <property type="expression patterns" value="Expressed in pharyngeal muscle cell (C elegans) and 1 other cell type or tissue"/>
</dbReference>
<dbReference type="GO" id="GO:0005886">
    <property type="term" value="C:plasma membrane"/>
    <property type="evidence" value="ECO:0000318"/>
    <property type="project" value="GO_Central"/>
</dbReference>
<dbReference type="GO" id="GO:0098839">
    <property type="term" value="C:postsynaptic density membrane"/>
    <property type="evidence" value="ECO:0000318"/>
    <property type="project" value="GO_Central"/>
</dbReference>
<dbReference type="GO" id="GO:0008066">
    <property type="term" value="F:glutamate receptor activity"/>
    <property type="evidence" value="ECO:0000318"/>
    <property type="project" value="GO_Central"/>
</dbReference>
<dbReference type="GO" id="GO:1904315">
    <property type="term" value="F:transmitter-gated monoatomic ion channel activity involved in regulation of postsynaptic membrane potential"/>
    <property type="evidence" value="ECO:0000318"/>
    <property type="project" value="GO_Central"/>
</dbReference>
<dbReference type="GO" id="GO:0120169">
    <property type="term" value="P:detection of cold stimulus involved in thermoception"/>
    <property type="evidence" value="ECO:0000314"/>
    <property type="project" value="UniProtKB"/>
</dbReference>
<dbReference type="GO" id="GO:0050965">
    <property type="term" value="P:detection of temperature stimulus involved in sensory perception of pain"/>
    <property type="evidence" value="ECO:0000315"/>
    <property type="project" value="UniProtKB"/>
</dbReference>
<dbReference type="GO" id="GO:0050804">
    <property type="term" value="P:modulation of chemical synaptic transmission"/>
    <property type="evidence" value="ECO:0000318"/>
    <property type="project" value="GO_Central"/>
</dbReference>
<dbReference type="GO" id="GO:0035249">
    <property type="term" value="P:synaptic transmission, glutamatergic"/>
    <property type="evidence" value="ECO:0000318"/>
    <property type="project" value="GO_Central"/>
</dbReference>
<dbReference type="CDD" id="cd06368">
    <property type="entry name" value="PBP1_iGluR_non_NMDA-like"/>
    <property type="match status" value="1"/>
</dbReference>
<dbReference type="FunFam" id="3.40.190.10:FF:000255">
    <property type="entry name" value="GLutamate Receptor family (AMPA)"/>
    <property type="match status" value="1"/>
</dbReference>
<dbReference type="FunFam" id="3.40.190.10:FF:000060">
    <property type="entry name" value="Glutamate receptor ionotropic, kainate 1"/>
    <property type="match status" value="1"/>
</dbReference>
<dbReference type="FunFam" id="1.10.287.70:FF:000010">
    <property type="entry name" value="Putative glutamate receptor ionotropic kainate 1"/>
    <property type="match status" value="1"/>
</dbReference>
<dbReference type="Gene3D" id="1.10.287.70">
    <property type="match status" value="1"/>
</dbReference>
<dbReference type="Gene3D" id="3.40.50.2300">
    <property type="match status" value="2"/>
</dbReference>
<dbReference type="Gene3D" id="3.40.190.10">
    <property type="entry name" value="Periplasmic binding protein-like II"/>
    <property type="match status" value="2"/>
</dbReference>
<dbReference type="InterPro" id="IPR001828">
    <property type="entry name" value="ANF_lig-bd_rcpt"/>
</dbReference>
<dbReference type="InterPro" id="IPR019594">
    <property type="entry name" value="Glu/Gly-bd"/>
</dbReference>
<dbReference type="InterPro" id="IPR001508">
    <property type="entry name" value="Iono_Glu_rcpt_met"/>
</dbReference>
<dbReference type="InterPro" id="IPR015683">
    <property type="entry name" value="Ionotropic_Glu_rcpt"/>
</dbReference>
<dbReference type="InterPro" id="IPR001320">
    <property type="entry name" value="Iontro_rcpt_C"/>
</dbReference>
<dbReference type="InterPro" id="IPR028082">
    <property type="entry name" value="Peripla_BP_I"/>
</dbReference>
<dbReference type="PANTHER" id="PTHR18966">
    <property type="entry name" value="IONOTROPIC GLUTAMATE RECEPTOR"/>
    <property type="match status" value="1"/>
</dbReference>
<dbReference type="Pfam" id="PF01094">
    <property type="entry name" value="ANF_receptor"/>
    <property type="match status" value="1"/>
</dbReference>
<dbReference type="Pfam" id="PF00060">
    <property type="entry name" value="Lig_chan"/>
    <property type="match status" value="1"/>
</dbReference>
<dbReference type="Pfam" id="PF10613">
    <property type="entry name" value="Lig_chan-Glu_bd"/>
    <property type="match status" value="1"/>
</dbReference>
<dbReference type="PRINTS" id="PR00177">
    <property type="entry name" value="NMDARECEPTOR"/>
</dbReference>
<dbReference type="SMART" id="SM00918">
    <property type="entry name" value="Lig_chan-Glu_bd"/>
    <property type="match status" value="1"/>
</dbReference>
<dbReference type="SMART" id="SM00079">
    <property type="entry name" value="PBPe"/>
    <property type="match status" value="1"/>
</dbReference>
<dbReference type="SUPFAM" id="SSF53822">
    <property type="entry name" value="Periplasmic binding protein-like I"/>
    <property type="match status" value="1"/>
</dbReference>
<dbReference type="SUPFAM" id="SSF53850">
    <property type="entry name" value="Periplasmic binding protein-like II"/>
    <property type="match status" value="1"/>
</dbReference>
<dbReference type="SUPFAM" id="SSF81324">
    <property type="entry name" value="Voltage-gated potassium channels"/>
    <property type="match status" value="1"/>
</dbReference>
<comment type="function">
    <text evidence="1 6">Ionotropic glutamate receptor (By similarity). Activation by glutamate requires additional verification (PubMed:31474366). L-glutamate acts as an excitatory neurotransmitter at many synapses in the central nervous system. Binding of the excitatory neurotransmitter L-glutamate induces a conformation change, leading to the opening of the cation channel, and thereby converts the chemical signal to an electrical impulse. The receptor then desensitizes rapidly and enters a transient inactive state, characterized by the presence of bound agonist (By similarity).</text>
</comment>
<comment type="function">
    <text evidence="6">Independent of its ionotropic glutamate receptor activity, acts as a thermoreceptor in the ASER neuron where it triggers a calcium response to activate cold avoidance behavior in response to temperatures below 19 degrees Celsius (PubMed:31474366). Possibly functions as a metabotropic cold receptor and acts upstream of the G(o) G protein goa-1 in the ASER neuron (PubMed:31474366). Also functions in cold sensing in the intestine (PubMed:31474366).</text>
</comment>
<comment type="activity regulation">
    <text evidence="6">Activated by low temperature of 18 degrees Celsius in ASER neuron.</text>
</comment>
<comment type="subcellular location">
    <subcellularLocation>
        <location evidence="2">Cell membrane</location>
        <topology evidence="3">Multi-pass membrane protein</topology>
    </subcellularLocation>
    <subcellularLocation>
        <location evidence="2">Postsynaptic cell membrane</location>
        <topology evidence="3">Multi-pass membrane protein</topology>
    </subcellularLocation>
</comment>
<comment type="tissue specificity">
    <text evidence="5 6">Expressed in the intestine and in the ASER neuron (PubMed:31474366). Also expressed in the thermosensitive RIA interneuron (PubMed:11222641).</text>
</comment>
<comment type="developmental stage">
    <text evidence="5">During embryogenesis, expressed just before hatching at low levels.</text>
</comment>
<comment type="disruption phenotype">
    <text evidence="6">Abolishes signal transduction during cold signaling in intestine and ASER neuron.</text>
</comment>
<comment type="similarity">
    <text evidence="3">Belongs to the glutamate-gated ion channel (TC 1.A.10.1) family.</text>
</comment>
<protein>
    <recommendedName>
        <fullName evidence="7">Glutamate receptor ionotropic, kainate glr-3</fullName>
    </recommendedName>
</protein>